<sequence>MKIDLSRLVTESRNPASAEIDTLSTVEMLRVINQEDQKVALAVEAVLPHIAQAVDAITHAFAHGGRLIYMGAGTSGRLGILDASECPPTYGTPAELVVGLIAGGHTAILKAVENAEDNRELAQNDLKSLNLTANDVVVGIAASGRTPYVLGGLEYATLIGATTVSIACNPVCPMADAAQIAILPVVGPEVVTGSSRMKAGTAQKLVLNMLTSGAMIRSGKVFGNLMVDVEATNAKLIQRQTNIVVEATGVCAEEAEEALKACDRHCKTAILMILSGLDAEQAKTKLQQHNGFIRAALNDK</sequence>
<feature type="chain" id="PRO_0000214845" description="N-acetylmuramic acid 6-phosphate etherase">
    <location>
        <begin position="1"/>
        <end position="300"/>
    </location>
</feature>
<feature type="domain" description="SIS" evidence="1">
    <location>
        <begin position="57"/>
        <end position="220"/>
    </location>
</feature>
<feature type="active site" description="Proton donor" evidence="1">
    <location>
        <position position="85"/>
    </location>
</feature>
<feature type="active site" evidence="1">
    <location>
        <position position="116"/>
    </location>
</feature>
<dbReference type="EC" id="4.2.1.126" evidence="1"/>
<dbReference type="EMBL" id="AE016796">
    <property type="protein sequence ID" value="AAO08042.1"/>
    <property type="molecule type" value="Genomic_DNA"/>
</dbReference>
<dbReference type="RefSeq" id="WP_026130983.1">
    <property type="nucleotide sequence ID" value="NC_004460.2"/>
</dbReference>
<dbReference type="SMR" id="Q8D4Z4"/>
<dbReference type="KEGG" id="vvu:VV2_1141"/>
<dbReference type="HOGENOM" id="CLU_049049_1_1_6"/>
<dbReference type="UniPathway" id="UPA00342"/>
<dbReference type="UniPathway" id="UPA00343"/>
<dbReference type="UniPathway" id="UPA00544"/>
<dbReference type="Proteomes" id="UP000002275">
    <property type="component" value="Chromosome 2"/>
</dbReference>
<dbReference type="GO" id="GO:0097367">
    <property type="term" value="F:carbohydrate derivative binding"/>
    <property type="evidence" value="ECO:0007669"/>
    <property type="project" value="InterPro"/>
</dbReference>
<dbReference type="GO" id="GO:0016835">
    <property type="term" value="F:carbon-oxygen lyase activity"/>
    <property type="evidence" value="ECO:0007669"/>
    <property type="project" value="UniProtKB-UniRule"/>
</dbReference>
<dbReference type="GO" id="GO:0016803">
    <property type="term" value="F:ether hydrolase activity"/>
    <property type="evidence" value="ECO:0007669"/>
    <property type="project" value="TreeGrafter"/>
</dbReference>
<dbReference type="GO" id="GO:0097175">
    <property type="term" value="P:1,6-anhydro-N-acetyl-beta-muramic acid catabolic process"/>
    <property type="evidence" value="ECO:0007669"/>
    <property type="project" value="UniProtKB-UniRule"/>
</dbReference>
<dbReference type="GO" id="GO:0046348">
    <property type="term" value="P:amino sugar catabolic process"/>
    <property type="evidence" value="ECO:0007669"/>
    <property type="project" value="InterPro"/>
</dbReference>
<dbReference type="GO" id="GO:0097173">
    <property type="term" value="P:N-acetylmuramic acid catabolic process"/>
    <property type="evidence" value="ECO:0007669"/>
    <property type="project" value="UniProtKB-UniPathway"/>
</dbReference>
<dbReference type="GO" id="GO:0009254">
    <property type="term" value="P:peptidoglycan turnover"/>
    <property type="evidence" value="ECO:0007669"/>
    <property type="project" value="UniProtKB-UniRule"/>
</dbReference>
<dbReference type="CDD" id="cd05007">
    <property type="entry name" value="SIS_Etherase"/>
    <property type="match status" value="1"/>
</dbReference>
<dbReference type="FunFam" id="1.10.8.1080:FF:000001">
    <property type="entry name" value="N-acetylmuramic acid 6-phosphate etherase"/>
    <property type="match status" value="1"/>
</dbReference>
<dbReference type="FunFam" id="3.40.50.10490:FF:000014">
    <property type="entry name" value="N-acetylmuramic acid 6-phosphate etherase"/>
    <property type="match status" value="1"/>
</dbReference>
<dbReference type="Gene3D" id="1.10.8.1080">
    <property type="match status" value="1"/>
</dbReference>
<dbReference type="Gene3D" id="3.40.50.10490">
    <property type="entry name" value="Glucose-6-phosphate isomerase like protein, domain 1"/>
    <property type="match status" value="1"/>
</dbReference>
<dbReference type="HAMAP" id="MF_00068">
    <property type="entry name" value="MurQ"/>
    <property type="match status" value="1"/>
</dbReference>
<dbReference type="InterPro" id="IPR005488">
    <property type="entry name" value="Etherase_MurQ"/>
</dbReference>
<dbReference type="InterPro" id="IPR005486">
    <property type="entry name" value="Glucokinase_regulatory_CS"/>
</dbReference>
<dbReference type="InterPro" id="IPR040190">
    <property type="entry name" value="MURQ/GCKR"/>
</dbReference>
<dbReference type="InterPro" id="IPR001347">
    <property type="entry name" value="SIS_dom"/>
</dbReference>
<dbReference type="InterPro" id="IPR046348">
    <property type="entry name" value="SIS_dom_sf"/>
</dbReference>
<dbReference type="NCBIfam" id="TIGR00274">
    <property type="entry name" value="N-acetylmuramic acid 6-phosphate etherase"/>
    <property type="match status" value="1"/>
</dbReference>
<dbReference type="NCBIfam" id="NF003915">
    <property type="entry name" value="PRK05441.1"/>
    <property type="match status" value="1"/>
</dbReference>
<dbReference type="NCBIfam" id="NF009222">
    <property type="entry name" value="PRK12570.1"/>
    <property type="match status" value="1"/>
</dbReference>
<dbReference type="PANTHER" id="PTHR10088">
    <property type="entry name" value="GLUCOKINASE REGULATORY PROTEIN"/>
    <property type="match status" value="1"/>
</dbReference>
<dbReference type="PANTHER" id="PTHR10088:SF4">
    <property type="entry name" value="GLUCOKINASE REGULATORY PROTEIN"/>
    <property type="match status" value="1"/>
</dbReference>
<dbReference type="Pfam" id="PF22645">
    <property type="entry name" value="GKRP_SIS_N"/>
    <property type="match status" value="1"/>
</dbReference>
<dbReference type="SUPFAM" id="SSF53697">
    <property type="entry name" value="SIS domain"/>
    <property type="match status" value="1"/>
</dbReference>
<dbReference type="PROSITE" id="PS01272">
    <property type="entry name" value="GCKR"/>
    <property type="match status" value="1"/>
</dbReference>
<dbReference type="PROSITE" id="PS51464">
    <property type="entry name" value="SIS"/>
    <property type="match status" value="1"/>
</dbReference>
<evidence type="ECO:0000255" key="1">
    <source>
        <dbReference type="HAMAP-Rule" id="MF_00068"/>
    </source>
</evidence>
<proteinExistence type="inferred from homology"/>
<gene>
    <name evidence="1" type="primary">murQ</name>
    <name type="ordered locus">VV2_1141</name>
</gene>
<name>MURQ_VIBVU</name>
<protein>
    <recommendedName>
        <fullName evidence="1">N-acetylmuramic acid 6-phosphate etherase</fullName>
        <shortName evidence="1">MurNAc-6-P etherase</shortName>
        <ecNumber evidence="1">4.2.1.126</ecNumber>
    </recommendedName>
    <alternativeName>
        <fullName evidence="1">N-acetylmuramic acid 6-phosphate hydrolase</fullName>
    </alternativeName>
    <alternativeName>
        <fullName evidence="1">N-acetylmuramic acid 6-phosphate lyase</fullName>
    </alternativeName>
</protein>
<keyword id="KW-0119">Carbohydrate metabolism</keyword>
<keyword id="KW-0456">Lyase</keyword>
<comment type="function">
    <text evidence="1">Specifically catalyzes the cleavage of the D-lactyl ether substituent of MurNAc 6-phosphate, producing GlcNAc 6-phosphate and D-lactate. Together with AnmK, is also required for the utilization of anhydro-N-acetylmuramic acid (anhMurNAc) either imported from the medium or derived from its own cell wall murein, and thus plays a role in cell wall recycling.</text>
</comment>
<comment type="catalytic activity">
    <reaction evidence="1">
        <text>N-acetyl-D-muramate 6-phosphate + H2O = N-acetyl-D-glucosamine 6-phosphate + (R)-lactate</text>
        <dbReference type="Rhea" id="RHEA:26410"/>
        <dbReference type="ChEBI" id="CHEBI:15377"/>
        <dbReference type="ChEBI" id="CHEBI:16004"/>
        <dbReference type="ChEBI" id="CHEBI:57513"/>
        <dbReference type="ChEBI" id="CHEBI:58722"/>
        <dbReference type="EC" id="4.2.1.126"/>
    </reaction>
</comment>
<comment type="pathway">
    <text evidence="1">Amino-sugar metabolism; 1,6-anhydro-N-acetylmuramate degradation.</text>
</comment>
<comment type="pathway">
    <text evidence="1">Amino-sugar metabolism; N-acetylmuramate degradation.</text>
</comment>
<comment type="pathway">
    <text evidence="1">Cell wall biogenesis; peptidoglycan recycling.</text>
</comment>
<comment type="subunit">
    <text evidence="1">Homodimer.</text>
</comment>
<comment type="miscellaneous">
    <text evidence="1">A lyase-type mechanism (elimination/hydration) is suggested for the cleavage of the lactyl ether bond of MurNAc 6-phosphate, with the formation of an alpha,beta-unsaturated aldehyde intermediate with (E)-stereochemistry, followed by the syn addition of water to give product.</text>
</comment>
<comment type="similarity">
    <text evidence="1">Belongs to the GCKR-like family. MurNAc-6-P etherase subfamily.</text>
</comment>
<accession>Q8D4Z4</accession>
<reference key="1">
    <citation type="submission" date="2002-12" db="EMBL/GenBank/DDBJ databases">
        <title>Complete genome sequence of Vibrio vulnificus CMCP6.</title>
        <authorList>
            <person name="Rhee J.H."/>
            <person name="Kim S.Y."/>
            <person name="Chung S.S."/>
            <person name="Kim J.J."/>
            <person name="Moon Y.H."/>
            <person name="Jeong H."/>
            <person name="Choy H.E."/>
        </authorList>
    </citation>
    <scope>NUCLEOTIDE SEQUENCE [LARGE SCALE GENOMIC DNA]</scope>
    <source>
        <strain>CMCP6</strain>
    </source>
</reference>
<organism>
    <name type="scientific">Vibrio vulnificus (strain CMCP6)</name>
    <dbReference type="NCBI Taxonomy" id="216895"/>
    <lineage>
        <taxon>Bacteria</taxon>
        <taxon>Pseudomonadati</taxon>
        <taxon>Pseudomonadota</taxon>
        <taxon>Gammaproteobacteria</taxon>
        <taxon>Vibrionales</taxon>
        <taxon>Vibrionaceae</taxon>
        <taxon>Vibrio</taxon>
    </lineage>
</organism>